<sequence>MESLPQPQNQSSPATTPAKILLGKYELGRRLGSGSFAKVHLARSIESDELVAVKIIEKKKTIESGMEPRIIREIDAMRRLRHHPNILKIHEVMATKSKIYLVMELASGGELFSKVLRRGRLPESTARRYFQQLASALRFSHQDGVAHRDVKPQNLLLDEQGNLKVSDFGLSALPEHLQNGLLHTACGTPAYTAPEVISRRGYDGAKADAWSCGVILFVLLVGDVPFDDSNIAAMYRKIHRRDYRFPSWISKQAKSIIYQMLDPNPVTRMSIETVMKTNWFKKSLETSEFHRNVFDSEVEMKSSVNSITAFDLISLSSGLDLSGLFEAKKKKERRFTAKVSGVEVEEKAKMIGEKLGYVVKKKMMKKEGEVKVVGLGRGRTVIVVEAVELTVDVVVVEVKVVEGEEDDSRWSDLITELEDIVLSWHNDIM</sequence>
<name>CIPK7_ARATH</name>
<keyword id="KW-0067">ATP-binding</keyword>
<keyword id="KW-0418">Kinase</keyword>
<keyword id="KW-0464">Manganese</keyword>
<keyword id="KW-0547">Nucleotide-binding</keyword>
<keyword id="KW-0597">Phosphoprotein</keyword>
<keyword id="KW-1185">Reference proteome</keyword>
<keyword id="KW-0723">Serine/threonine-protein kinase</keyword>
<keyword id="KW-0808">Transferase</keyword>
<evidence type="ECO:0000250" key="1"/>
<evidence type="ECO:0000250" key="2">
    <source>
        <dbReference type="UniProtKB" id="Q38997"/>
    </source>
</evidence>
<evidence type="ECO:0000250" key="3">
    <source>
        <dbReference type="UniProtKB" id="Q93V58"/>
    </source>
</evidence>
<evidence type="ECO:0000255" key="4">
    <source>
        <dbReference type="PROSITE-ProRule" id="PRU00159"/>
    </source>
</evidence>
<evidence type="ECO:0000255" key="5">
    <source>
        <dbReference type="PROSITE-ProRule" id="PRU00256"/>
    </source>
</evidence>
<evidence type="ECO:0000255" key="6">
    <source>
        <dbReference type="PROSITE-ProRule" id="PRU10027"/>
    </source>
</evidence>
<evidence type="ECO:0000269" key="7">
    <source>
    </source>
</evidence>
<evidence type="ECO:0000269" key="8">
    <source>
    </source>
</evidence>
<evidence type="ECO:0000269" key="9">
    <source>
    </source>
</evidence>
<evidence type="ECO:0000269" key="10">
    <source>
    </source>
</evidence>
<evidence type="ECO:0000269" key="11">
    <source>
    </source>
</evidence>
<evidence type="ECO:0000305" key="12"/>
<organism>
    <name type="scientific">Arabidopsis thaliana</name>
    <name type="common">Mouse-ear cress</name>
    <dbReference type="NCBI Taxonomy" id="3702"/>
    <lineage>
        <taxon>Eukaryota</taxon>
        <taxon>Viridiplantae</taxon>
        <taxon>Streptophyta</taxon>
        <taxon>Embryophyta</taxon>
        <taxon>Tracheophyta</taxon>
        <taxon>Spermatophyta</taxon>
        <taxon>Magnoliopsida</taxon>
        <taxon>eudicotyledons</taxon>
        <taxon>Gunneridae</taxon>
        <taxon>Pentapetalae</taxon>
        <taxon>rosids</taxon>
        <taxon>malvids</taxon>
        <taxon>Brassicales</taxon>
        <taxon>Brassicaceae</taxon>
        <taxon>Camelineae</taxon>
        <taxon>Arabidopsis</taxon>
    </lineage>
</organism>
<gene>
    <name type="primary">CIPK7</name>
    <name type="synonym">PKS7</name>
    <name type="synonym">SnRK3.10</name>
    <name type="synonym">SR2</name>
    <name type="synonym">SRPK1</name>
    <name type="ordered locus">At3g23000</name>
    <name type="ORF">MXC7.3</name>
</gene>
<proteinExistence type="evidence at protein level"/>
<dbReference type="EC" id="2.7.11.1"/>
<dbReference type="EMBL" id="AF290192">
    <property type="protein sequence ID" value="AAK16682.1"/>
    <property type="molecule type" value="mRNA"/>
</dbReference>
<dbReference type="EMBL" id="AB035148">
    <property type="protein sequence ID" value="BAB11738.1"/>
    <property type="molecule type" value="mRNA"/>
</dbReference>
<dbReference type="EMBL" id="AB027153">
    <property type="protein sequence ID" value="BAA77716.2"/>
    <property type="molecule type" value="mRNA"/>
</dbReference>
<dbReference type="EMBL" id="AF339148">
    <property type="protein sequence ID" value="AAK26846.1"/>
    <property type="molecule type" value="mRNA"/>
</dbReference>
<dbReference type="EMBL" id="AB026655">
    <property type="protein sequence ID" value="BAB02091.1"/>
    <property type="molecule type" value="Genomic_DNA"/>
</dbReference>
<dbReference type="EMBL" id="CP002686">
    <property type="protein sequence ID" value="AEE76704.1"/>
    <property type="molecule type" value="Genomic_DNA"/>
</dbReference>
<dbReference type="EMBL" id="AY054686">
    <property type="protein sequence ID" value="AAK96877.1"/>
    <property type="molecule type" value="mRNA"/>
</dbReference>
<dbReference type="EMBL" id="BT020492">
    <property type="protein sequence ID" value="AAW38993.1"/>
    <property type="molecule type" value="mRNA"/>
</dbReference>
<dbReference type="EMBL" id="BT028967">
    <property type="protein sequence ID" value="ABI54342.1"/>
    <property type="molecule type" value="mRNA"/>
</dbReference>
<dbReference type="RefSeq" id="NP_188940.1">
    <property type="nucleotide sequence ID" value="NM_113200.3"/>
</dbReference>
<dbReference type="SMR" id="Q9XIW0"/>
<dbReference type="BioGRID" id="7206">
    <property type="interactions" value="7"/>
</dbReference>
<dbReference type="FunCoup" id="Q9XIW0">
    <property type="interactions" value="858"/>
</dbReference>
<dbReference type="IntAct" id="Q9XIW0">
    <property type="interactions" value="8"/>
</dbReference>
<dbReference type="STRING" id="3702.Q9XIW0"/>
<dbReference type="PaxDb" id="3702-AT3G23000.1"/>
<dbReference type="ProteomicsDB" id="246685"/>
<dbReference type="EnsemblPlants" id="AT3G23000.1">
    <property type="protein sequence ID" value="AT3G23000.1"/>
    <property type="gene ID" value="AT3G23000"/>
</dbReference>
<dbReference type="GeneID" id="821874"/>
<dbReference type="Gramene" id="AT3G23000.1">
    <property type="protein sequence ID" value="AT3G23000.1"/>
    <property type="gene ID" value="AT3G23000"/>
</dbReference>
<dbReference type="KEGG" id="ath:AT3G23000"/>
<dbReference type="Araport" id="AT3G23000"/>
<dbReference type="TAIR" id="AT3G23000">
    <property type="gene designation" value="CIPK7"/>
</dbReference>
<dbReference type="eggNOG" id="KOG0583">
    <property type="taxonomic scope" value="Eukaryota"/>
</dbReference>
<dbReference type="HOGENOM" id="CLU_000288_59_0_1"/>
<dbReference type="InParanoid" id="Q9XIW0"/>
<dbReference type="OMA" id="MEPRIIC"/>
<dbReference type="OrthoDB" id="193931at2759"/>
<dbReference type="PhylomeDB" id="Q9XIW0"/>
<dbReference type="PRO" id="PR:Q9XIW0"/>
<dbReference type="Proteomes" id="UP000006548">
    <property type="component" value="Chromosome 3"/>
</dbReference>
<dbReference type="ExpressionAtlas" id="Q9XIW0">
    <property type="expression patterns" value="baseline and differential"/>
</dbReference>
<dbReference type="GO" id="GO:0005524">
    <property type="term" value="F:ATP binding"/>
    <property type="evidence" value="ECO:0007669"/>
    <property type="project" value="UniProtKB-KW"/>
</dbReference>
<dbReference type="GO" id="GO:0106310">
    <property type="term" value="F:protein serine kinase activity"/>
    <property type="evidence" value="ECO:0007669"/>
    <property type="project" value="RHEA"/>
</dbReference>
<dbReference type="GO" id="GO:0004674">
    <property type="term" value="F:protein serine/threonine kinase activity"/>
    <property type="evidence" value="ECO:0007669"/>
    <property type="project" value="UniProtKB-KW"/>
</dbReference>
<dbReference type="GO" id="GO:0009409">
    <property type="term" value="P:response to cold"/>
    <property type="evidence" value="ECO:0000270"/>
    <property type="project" value="TAIR"/>
</dbReference>
<dbReference type="GO" id="GO:0007165">
    <property type="term" value="P:signal transduction"/>
    <property type="evidence" value="ECO:0007669"/>
    <property type="project" value="InterPro"/>
</dbReference>
<dbReference type="CDD" id="cd12195">
    <property type="entry name" value="CIPK_C"/>
    <property type="match status" value="1"/>
</dbReference>
<dbReference type="FunFam" id="1.10.510.10:FF:000653">
    <property type="entry name" value="Non-specific serine/threonine protein kinase"/>
    <property type="match status" value="1"/>
</dbReference>
<dbReference type="FunFam" id="3.30.200.20:FF:000627">
    <property type="entry name" value="Non-specific serine/threonine protein kinase"/>
    <property type="match status" value="1"/>
</dbReference>
<dbReference type="FunFam" id="3.30.310.80:FF:000005">
    <property type="entry name" value="Non-specific serine/threonine protein kinase"/>
    <property type="match status" value="1"/>
</dbReference>
<dbReference type="Gene3D" id="3.30.310.80">
    <property type="entry name" value="Kinase associated domain 1, KA1"/>
    <property type="match status" value="1"/>
</dbReference>
<dbReference type="Gene3D" id="3.30.200.20">
    <property type="entry name" value="Phosphorylase Kinase, domain 1"/>
    <property type="match status" value="1"/>
</dbReference>
<dbReference type="Gene3D" id="1.10.510.10">
    <property type="entry name" value="Transferase(Phosphotransferase) domain 1"/>
    <property type="match status" value="1"/>
</dbReference>
<dbReference type="InterPro" id="IPR011009">
    <property type="entry name" value="Kinase-like_dom_sf"/>
</dbReference>
<dbReference type="InterPro" id="IPR018451">
    <property type="entry name" value="NAF/FISL_domain"/>
</dbReference>
<dbReference type="InterPro" id="IPR004041">
    <property type="entry name" value="NAF_dom"/>
</dbReference>
<dbReference type="InterPro" id="IPR000719">
    <property type="entry name" value="Prot_kinase_dom"/>
</dbReference>
<dbReference type="InterPro" id="IPR017441">
    <property type="entry name" value="Protein_kinase_ATP_BS"/>
</dbReference>
<dbReference type="InterPro" id="IPR008271">
    <property type="entry name" value="Ser/Thr_kinase_AS"/>
</dbReference>
<dbReference type="PANTHER" id="PTHR43895">
    <property type="entry name" value="CALCIUM/CALMODULIN-DEPENDENT PROTEIN KINASE KINASE-RELATED"/>
    <property type="match status" value="1"/>
</dbReference>
<dbReference type="PANTHER" id="PTHR43895:SF33">
    <property type="entry name" value="PROTEIN KINASE DOMAIN-CONTAINING PROTEIN"/>
    <property type="match status" value="1"/>
</dbReference>
<dbReference type="Pfam" id="PF03822">
    <property type="entry name" value="NAF"/>
    <property type="match status" value="1"/>
</dbReference>
<dbReference type="Pfam" id="PF00069">
    <property type="entry name" value="Pkinase"/>
    <property type="match status" value="1"/>
</dbReference>
<dbReference type="SMART" id="SM00220">
    <property type="entry name" value="S_TKc"/>
    <property type="match status" value="1"/>
</dbReference>
<dbReference type="SUPFAM" id="SSF56112">
    <property type="entry name" value="Protein kinase-like (PK-like)"/>
    <property type="match status" value="1"/>
</dbReference>
<dbReference type="PROSITE" id="PS50816">
    <property type="entry name" value="NAF"/>
    <property type="match status" value="1"/>
</dbReference>
<dbReference type="PROSITE" id="PS00107">
    <property type="entry name" value="PROTEIN_KINASE_ATP"/>
    <property type="match status" value="1"/>
</dbReference>
<dbReference type="PROSITE" id="PS50011">
    <property type="entry name" value="PROTEIN_KINASE_DOM"/>
    <property type="match status" value="1"/>
</dbReference>
<dbReference type="PROSITE" id="PS00108">
    <property type="entry name" value="PROTEIN_KINASE_ST"/>
    <property type="match status" value="1"/>
</dbReference>
<accession>Q9XIW0</accession>
<accession>Q93Y18</accession>
<accession>Q9FZN7</accession>
<protein>
    <recommendedName>
        <fullName>CBL-interacting serine/threonine-protein kinase 7</fullName>
        <ecNumber>2.7.11.1</ecNumber>
    </recommendedName>
    <alternativeName>
        <fullName>SNF1-related kinase 3.10</fullName>
    </alternativeName>
    <alternativeName>
        <fullName>SOS2-like protein kinase PKS7</fullName>
    </alternativeName>
    <alternativeName>
        <fullName>Serine/threonine-protein kinase SR2</fullName>
        <shortName>AtSR2</shortName>
        <shortName>AtSRPK1</shortName>
    </alternativeName>
</protein>
<feature type="chain" id="PRO_0000337210" description="CBL-interacting serine/threonine-protein kinase 7">
    <location>
        <begin position="1"/>
        <end position="429"/>
    </location>
</feature>
<feature type="domain" description="Protein kinase" evidence="4">
    <location>
        <begin position="25"/>
        <end position="280"/>
    </location>
</feature>
<feature type="domain" description="NAF" evidence="5">
    <location>
        <begin position="302"/>
        <end position="326"/>
    </location>
</feature>
<feature type="region of interest" description="Activation loop" evidence="1">
    <location>
        <begin position="167"/>
        <end position="195"/>
    </location>
</feature>
<feature type="region of interest" description="PPI" evidence="1">
    <location>
        <begin position="330"/>
        <end position="363"/>
    </location>
</feature>
<feature type="active site" description="Proton acceptor" evidence="4 6">
    <location>
        <position position="149"/>
    </location>
</feature>
<feature type="binding site" evidence="4">
    <location>
        <begin position="31"/>
        <end position="39"/>
    </location>
    <ligand>
        <name>ATP</name>
        <dbReference type="ChEBI" id="CHEBI:30616"/>
    </ligand>
</feature>
<feature type="binding site" evidence="4">
    <location>
        <position position="54"/>
    </location>
    <ligand>
        <name>ATP</name>
        <dbReference type="ChEBI" id="CHEBI:30616"/>
    </ligand>
</feature>
<feature type="modified residue" description="Phosphoserine" evidence="3">
    <location>
        <position position="171"/>
    </location>
</feature>
<feature type="modified residue" description="Phosphothreonine" evidence="2">
    <location>
        <position position="184"/>
    </location>
</feature>
<feature type="sequence conflict" description="In Ref. 2; BAB11738." evidence="12" ref="2">
    <original>Y</original>
    <variation>H</variation>
    <location>
        <position position="25"/>
    </location>
</feature>
<feature type="sequence conflict" description="In Ref. 7; AAK96877." evidence="12" ref="7">
    <original>V</original>
    <variation>A</variation>
    <location>
        <position position="224"/>
    </location>
</feature>
<feature type="sequence conflict" description="In Ref. 7; AAK96877." evidence="12" ref="7">
    <original>T</original>
    <variation>P</variation>
    <location>
        <position position="336"/>
    </location>
</feature>
<comment type="function">
    <text evidence="1 7 11">CIPK serine-threonine protein kinases interact with CBL proteins. Binding of a CBL protein to the regulatory NAF domain of CIPK protein lead to the activation of the kinase in a calcium-dependent manner (By similarity). Phosphorylates the rice sucrose synthase (SuSy) in vitro in an allosteric manner. Involved in cold response.</text>
</comment>
<comment type="catalytic activity">
    <reaction>
        <text>L-seryl-[protein] + ATP = O-phospho-L-seryl-[protein] + ADP + H(+)</text>
        <dbReference type="Rhea" id="RHEA:17989"/>
        <dbReference type="Rhea" id="RHEA-COMP:9863"/>
        <dbReference type="Rhea" id="RHEA-COMP:11604"/>
        <dbReference type="ChEBI" id="CHEBI:15378"/>
        <dbReference type="ChEBI" id="CHEBI:29999"/>
        <dbReference type="ChEBI" id="CHEBI:30616"/>
        <dbReference type="ChEBI" id="CHEBI:83421"/>
        <dbReference type="ChEBI" id="CHEBI:456216"/>
        <dbReference type="EC" id="2.7.11.1"/>
    </reaction>
</comment>
<comment type="catalytic activity">
    <reaction>
        <text>L-threonyl-[protein] + ATP = O-phospho-L-threonyl-[protein] + ADP + H(+)</text>
        <dbReference type="Rhea" id="RHEA:46608"/>
        <dbReference type="Rhea" id="RHEA-COMP:11060"/>
        <dbReference type="Rhea" id="RHEA-COMP:11605"/>
        <dbReference type="ChEBI" id="CHEBI:15378"/>
        <dbReference type="ChEBI" id="CHEBI:30013"/>
        <dbReference type="ChEBI" id="CHEBI:30616"/>
        <dbReference type="ChEBI" id="CHEBI:61977"/>
        <dbReference type="ChEBI" id="CHEBI:456216"/>
        <dbReference type="EC" id="2.7.11.1"/>
    </reaction>
</comment>
<comment type="cofactor">
    <cofactor evidence="1">
        <name>Mn(2+)</name>
        <dbReference type="ChEBI" id="CHEBI:29035"/>
    </cofactor>
</comment>
<comment type="subunit">
    <text evidence="8 10 11">Interacts with CBL1, CBL2 and CBL3.</text>
</comment>
<comment type="interaction">
    <interactant intactId="EBI-1765255">
        <id>Q9XIW0</id>
    </interactant>
    <interactant intactId="EBI-974530">
        <id>O81445</id>
        <label>CBL1</label>
    </interactant>
    <organismsDiffer>false</organismsDiffer>
    <experiments>3</experiments>
</comment>
<comment type="tissue specificity">
    <text evidence="9 11">Strongly expressed in leaves, but barely expressed in roots, stems or flowers.</text>
</comment>
<comment type="induction">
    <text evidence="7 9 11">By sucrose, glucose and fructose. Repressed in roots by salt stress. Up-regulated by cold stress.</text>
</comment>
<comment type="domain">
    <text evidence="1">The activation loop within the kinase domain is the target of phosphorylation/activation by upstream protein kinases. The PPI motif mediates the interaction with the ABI (abscisic acid-insensitive) phosphatases (By similarity).</text>
</comment>
<comment type="PTM">
    <text>Autophosphorylated.</text>
</comment>
<comment type="similarity">
    <text evidence="12">Belongs to the protein kinase superfamily. CAMK Ser/Thr protein kinase family. SNF1 subfamily.</text>
</comment>
<reference key="1">
    <citation type="journal article" date="2001" name="EMBO J.">
        <title>The NAF domain defines a novel protein-protein interaction module conserved in Ca(2+)-regulated kinases.</title>
        <authorList>
            <person name="Albrecht V."/>
            <person name="Ritz O."/>
            <person name="Linder S."/>
            <person name="Harter K."/>
            <person name="Kudla J."/>
        </authorList>
    </citation>
    <scope>NUCLEOTIDE SEQUENCE [MRNA]</scope>
    <scope>INTERACTION WITH CBL2 AND CBL3</scope>
</reference>
<reference key="2">
    <citation type="journal article" date="2001" name="Mol. Gen. Genet.">
        <title>Two novel genes encoding SNF-1 related protein kinases from Arabidopsis thaliana: differential accumulation of AtSR1 and AtSR2 transcripts in response to cytokinins and sugars, and phosphorylation of sucrose synthase by AtSR2.</title>
        <authorList>
            <person name="Chikano H."/>
            <person name="Ogawa M."/>
            <person name="Ikeda Y."/>
            <person name="Koizumi N."/>
            <person name="Kusano T."/>
            <person name="Sano H."/>
        </authorList>
    </citation>
    <scope>NUCLEOTIDE SEQUENCE [MRNA]</scope>
    <scope>FUNCTION</scope>
    <scope>AUTOPHOSPHORYLATION</scope>
    <scope>INDUCTION</scope>
    <source>
        <strain>cv. Columbia</strain>
    </source>
</reference>
<reference key="3">
    <citation type="submission" date="1999-05" db="EMBL/GenBank/DDBJ databases">
        <title>Arabidopsis thaliana mRNA for a novel SNF1 related protein kinase (ATSRPK1), partial cds.</title>
        <authorList>
            <person name="Nanmori T."/>
            <person name="Matsuoka D."/>
            <person name="Kono T."/>
        </authorList>
    </citation>
    <scope>NUCLEOTIDE SEQUENCE [MRNA]</scope>
</reference>
<reference key="4">
    <citation type="journal article" date="2001" name="Plant Cell">
        <title>Molecular characterization of functional domains in the protein kinase SOS2 that is required for plant salt tolerance.</title>
        <authorList>
            <person name="Guo Y."/>
            <person name="Halfter U."/>
            <person name="Ishitani M."/>
            <person name="Zhu J.-K."/>
        </authorList>
    </citation>
    <scope>NUCLEOTIDE SEQUENCE [MRNA]</scope>
    <scope>TISSUE SPECIFICITY</scope>
    <scope>INDUCTION</scope>
    <source>
        <strain>cv. Columbia</strain>
    </source>
</reference>
<reference key="5">
    <citation type="journal article" date="2000" name="DNA Res.">
        <title>Structural analysis of Arabidopsis thaliana chromosome 3. I. Sequence features of the regions of 4,504,864 bp covered by sixty P1 and TAC clones.</title>
        <authorList>
            <person name="Sato S."/>
            <person name="Nakamura Y."/>
            <person name="Kaneko T."/>
            <person name="Katoh T."/>
            <person name="Asamizu E."/>
            <person name="Tabata S."/>
        </authorList>
    </citation>
    <scope>NUCLEOTIDE SEQUENCE [LARGE SCALE GENOMIC DNA]</scope>
    <source>
        <strain>cv. Columbia</strain>
    </source>
</reference>
<reference key="6">
    <citation type="journal article" date="2017" name="Plant J.">
        <title>Araport11: a complete reannotation of the Arabidopsis thaliana reference genome.</title>
        <authorList>
            <person name="Cheng C.Y."/>
            <person name="Krishnakumar V."/>
            <person name="Chan A.P."/>
            <person name="Thibaud-Nissen F."/>
            <person name="Schobel S."/>
            <person name="Town C.D."/>
        </authorList>
    </citation>
    <scope>GENOME REANNOTATION</scope>
    <source>
        <strain>cv. Columbia</strain>
    </source>
</reference>
<reference key="7">
    <citation type="journal article" date="2003" name="Science">
        <title>Empirical analysis of transcriptional activity in the Arabidopsis genome.</title>
        <authorList>
            <person name="Yamada K."/>
            <person name="Lim J."/>
            <person name="Dale J.M."/>
            <person name="Chen H."/>
            <person name="Shinn P."/>
            <person name="Palm C.J."/>
            <person name="Southwick A.M."/>
            <person name="Wu H.C."/>
            <person name="Kim C.J."/>
            <person name="Nguyen M."/>
            <person name="Pham P.K."/>
            <person name="Cheuk R.F."/>
            <person name="Karlin-Newmann G."/>
            <person name="Liu S.X."/>
            <person name="Lam B."/>
            <person name="Sakano H."/>
            <person name="Wu T."/>
            <person name="Yu G."/>
            <person name="Miranda M."/>
            <person name="Quach H.L."/>
            <person name="Tripp M."/>
            <person name="Chang C.H."/>
            <person name="Lee J.M."/>
            <person name="Toriumi M.J."/>
            <person name="Chan M.M."/>
            <person name="Tang C.C."/>
            <person name="Onodera C.S."/>
            <person name="Deng J.M."/>
            <person name="Akiyama K."/>
            <person name="Ansari Y."/>
            <person name="Arakawa T."/>
            <person name="Banh J."/>
            <person name="Banno F."/>
            <person name="Bowser L."/>
            <person name="Brooks S.Y."/>
            <person name="Carninci P."/>
            <person name="Chao Q."/>
            <person name="Choy N."/>
            <person name="Enju A."/>
            <person name="Goldsmith A.D."/>
            <person name="Gurjal M."/>
            <person name="Hansen N.F."/>
            <person name="Hayashizaki Y."/>
            <person name="Johnson-Hopson C."/>
            <person name="Hsuan V.W."/>
            <person name="Iida K."/>
            <person name="Karnes M."/>
            <person name="Khan S."/>
            <person name="Koesema E."/>
            <person name="Ishida J."/>
            <person name="Jiang P.X."/>
            <person name="Jones T."/>
            <person name="Kawai J."/>
            <person name="Kamiya A."/>
            <person name="Meyers C."/>
            <person name="Nakajima M."/>
            <person name="Narusaka M."/>
            <person name="Seki M."/>
            <person name="Sakurai T."/>
            <person name="Satou M."/>
            <person name="Tamse R."/>
            <person name="Vaysberg M."/>
            <person name="Wallender E.K."/>
            <person name="Wong C."/>
            <person name="Yamamura Y."/>
            <person name="Yuan S."/>
            <person name="Shinozaki K."/>
            <person name="Davis R.W."/>
            <person name="Theologis A."/>
            <person name="Ecker J.R."/>
        </authorList>
    </citation>
    <scope>NUCLEOTIDE SEQUENCE [LARGE SCALE MRNA]</scope>
    <source>
        <strain>cv. Columbia</strain>
    </source>
</reference>
<reference key="8">
    <citation type="submission" date="2006-09" db="EMBL/GenBank/DDBJ databases">
        <title>Arabidopsis ORF clones.</title>
        <authorList>
            <person name="Bautista V.R."/>
            <person name="Kim C.J."/>
            <person name="Chen H."/>
            <person name="Quinitio C."/>
            <person name="Ecker J.R."/>
        </authorList>
    </citation>
    <scope>NUCLEOTIDE SEQUENCE [LARGE SCALE MRNA]</scope>
    <source>
        <strain>cv. Columbia</strain>
    </source>
</reference>
<reference key="9">
    <citation type="journal article" date="2003" name="Plant Physiol.">
        <title>The Arabidopsis CDPK-SnRK superfamily of protein kinases.</title>
        <authorList>
            <person name="Hrabak E.M."/>
            <person name="Chan C.W.M."/>
            <person name="Gribskov M."/>
            <person name="Harper J.F."/>
            <person name="Choi J.H."/>
            <person name="Halford N."/>
            <person name="Kudla J."/>
            <person name="Luan S."/>
            <person name="Nimmo H.G."/>
            <person name="Sussman M.R."/>
            <person name="Thomas M."/>
            <person name="Walker-Simmons K."/>
            <person name="Zhu J.-K."/>
            <person name="Harmon A.C."/>
        </authorList>
    </citation>
    <scope>GENE FAMILY</scope>
    <scope>NOMENCLATURE</scope>
</reference>
<reference key="10">
    <citation type="journal article" date="2004" name="Plant Physiol.">
        <title>Calcium sensors and their interacting protein kinases: genomics of the Arabidopsis and rice CBL-CIPK signaling networks.</title>
        <authorList>
            <person name="Kolukisaoglu U."/>
            <person name="Weinl S."/>
            <person name="Blazevic D."/>
            <person name="Batistic O."/>
            <person name="Kudla J."/>
        </authorList>
    </citation>
    <scope>INTERACTION WITH CBL1</scope>
</reference>
<reference key="11">
    <citation type="journal article" date="2011" name="Plant Sci.">
        <title>CIPK7 is involved in cold response by interacting with CBL1 in Arabidopsis thaliana.</title>
        <authorList>
            <person name="Huang C."/>
            <person name="Ding S."/>
            <person name="Zhang H."/>
            <person name="Du H."/>
            <person name="An L."/>
        </authorList>
    </citation>
    <scope>FUNCTION</scope>
    <scope>INTERACTION WITH CBL1</scope>
    <scope>INDUCTION BY COLD</scope>
    <scope>TISSUE SPECIFICITY</scope>
</reference>